<protein>
    <recommendedName>
        <fullName>Probable galacturonosyltransferase-like 8</fullName>
        <ecNumber>2.4.1.-</ecNumber>
    </recommendedName>
    <alternativeName>
        <fullName>Like glycosyl transferase 9</fullName>
    </alternativeName>
</protein>
<name>GATL8_ARATH</name>
<dbReference type="EC" id="2.4.1.-"/>
<dbReference type="EMBL" id="AC002396">
    <property type="protein sequence ID" value="AAC00579.1"/>
    <property type="molecule type" value="Genomic_DNA"/>
</dbReference>
<dbReference type="EMBL" id="CP002684">
    <property type="protein sequence ID" value="AEE30491.1"/>
    <property type="molecule type" value="Genomic_DNA"/>
</dbReference>
<dbReference type="EMBL" id="AK119069">
    <property type="protein sequence ID" value="BAC43645.1"/>
    <property type="molecule type" value="mRNA"/>
</dbReference>
<dbReference type="PIR" id="T00647">
    <property type="entry name" value="T00647"/>
</dbReference>
<dbReference type="RefSeq" id="NP_173827.1">
    <property type="nucleotide sequence ID" value="NM_102263.3"/>
</dbReference>
<dbReference type="SMR" id="O48684"/>
<dbReference type="FunCoup" id="O48684">
    <property type="interactions" value="774"/>
</dbReference>
<dbReference type="STRING" id="3702.O48684"/>
<dbReference type="CAZy" id="GT8">
    <property type="family name" value="Glycosyltransferase Family 8"/>
</dbReference>
<dbReference type="GlyCosmos" id="O48684">
    <property type="glycosylation" value="1 site, No reported glycans"/>
</dbReference>
<dbReference type="GlyGen" id="O48684">
    <property type="glycosylation" value="1 site"/>
</dbReference>
<dbReference type="PaxDb" id="3702-AT1G24170.1"/>
<dbReference type="ProteomicsDB" id="248564"/>
<dbReference type="EnsemblPlants" id="AT1G24170.1">
    <property type="protein sequence ID" value="AT1G24170.1"/>
    <property type="gene ID" value="AT1G24170"/>
</dbReference>
<dbReference type="GeneID" id="839030"/>
<dbReference type="Gramene" id="AT1G24170.1">
    <property type="protein sequence ID" value="AT1G24170.1"/>
    <property type="gene ID" value="AT1G24170"/>
</dbReference>
<dbReference type="KEGG" id="ath:AT1G24170"/>
<dbReference type="Araport" id="AT1G24170"/>
<dbReference type="TAIR" id="AT1G24170">
    <property type="gene designation" value="LGT9"/>
</dbReference>
<dbReference type="eggNOG" id="ENOG502QTN8">
    <property type="taxonomic scope" value="Eukaryota"/>
</dbReference>
<dbReference type="HOGENOM" id="CLU_034713_0_0_1"/>
<dbReference type="InParanoid" id="O48684"/>
<dbReference type="OMA" id="QKPCYFN"/>
<dbReference type="OrthoDB" id="411524at2759"/>
<dbReference type="PhylomeDB" id="O48684"/>
<dbReference type="UniPathway" id="UPA00845"/>
<dbReference type="PRO" id="PR:O48684"/>
<dbReference type="Proteomes" id="UP000006548">
    <property type="component" value="Chromosome 1"/>
</dbReference>
<dbReference type="ExpressionAtlas" id="O48684">
    <property type="expression patterns" value="baseline and differential"/>
</dbReference>
<dbReference type="GO" id="GO:0000139">
    <property type="term" value="C:Golgi membrane"/>
    <property type="evidence" value="ECO:0007669"/>
    <property type="project" value="UniProtKB-SubCell"/>
</dbReference>
<dbReference type="GO" id="GO:0047262">
    <property type="term" value="F:polygalacturonate 4-alpha-galacturonosyltransferase activity"/>
    <property type="evidence" value="ECO:0000250"/>
    <property type="project" value="TAIR"/>
</dbReference>
<dbReference type="GO" id="GO:0071555">
    <property type="term" value="P:cell wall organization"/>
    <property type="evidence" value="ECO:0007669"/>
    <property type="project" value="UniProtKB-KW"/>
</dbReference>
<dbReference type="GO" id="GO:0045489">
    <property type="term" value="P:pectin biosynthetic process"/>
    <property type="evidence" value="ECO:0007669"/>
    <property type="project" value="UniProtKB-UniPathway"/>
</dbReference>
<dbReference type="FunFam" id="3.90.550.10:FF:000024">
    <property type="entry name" value="Hexosyltransferase"/>
    <property type="match status" value="1"/>
</dbReference>
<dbReference type="Gene3D" id="3.90.550.10">
    <property type="entry name" value="Spore Coat Polysaccharide Biosynthesis Protein SpsA, Chain A"/>
    <property type="match status" value="1"/>
</dbReference>
<dbReference type="InterPro" id="IPR002495">
    <property type="entry name" value="Glyco_trans_8"/>
</dbReference>
<dbReference type="InterPro" id="IPR050748">
    <property type="entry name" value="Glycosyltrans_8_dom-fam"/>
</dbReference>
<dbReference type="InterPro" id="IPR029044">
    <property type="entry name" value="Nucleotide-diphossugar_trans"/>
</dbReference>
<dbReference type="PANTHER" id="PTHR13778:SF43">
    <property type="entry name" value="GALACTURONOSYLTRANSFERASE-LIKE 8-RELATED"/>
    <property type="match status" value="1"/>
</dbReference>
<dbReference type="PANTHER" id="PTHR13778">
    <property type="entry name" value="GLYCOSYLTRANSFERASE 8 DOMAIN-CONTAINING PROTEIN"/>
    <property type="match status" value="1"/>
</dbReference>
<dbReference type="Pfam" id="PF01501">
    <property type="entry name" value="Glyco_transf_8"/>
    <property type="match status" value="1"/>
</dbReference>
<dbReference type="SUPFAM" id="SSF53448">
    <property type="entry name" value="Nucleotide-diphospho-sugar transferases"/>
    <property type="match status" value="1"/>
</dbReference>
<sequence>MSSRFSLTVVCLIALLPFVVGIRLIPARITSVGDGGGGGGNNGFSKLGPFMEAPEYRNGKECVSSSVNRENFVSSSSSSNDPSLVHIAMTLDSEYLRGSIAAVHSVLRHASCPENVFFHFIAAEFDSASPRVLSQLVRSTFPSLNFKVYIFREDTVINLISSSIRLALENPLNYARNYLGDILDRSVERVIYLDSDVITVDDITKLWNTVLTGSRVIGAPEYCHANFTQYFTSGFWSDPALPGLISGQKPCYFNTGVMVMDLVRWREGNYREKLEQWMQLQKKMRIYDLGSLPPFLLVFAGNVEAIDHRWNQHGLGGDNIRGSCRSLHPGPVSLLHWSGKGKPWVRLDEKRPCPLDHLWEPYDLYKHKIERAKDQSLLGFASLSELTDDSSFL</sequence>
<gene>
    <name type="primary">GATL8</name>
    <name type="synonym">LGT9</name>
    <name type="ordered locus">At1g24170</name>
    <name type="ORF">F3I6.10</name>
</gene>
<keyword id="KW-0961">Cell wall biogenesis/degradation</keyword>
<keyword id="KW-0325">Glycoprotein</keyword>
<keyword id="KW-0328">Glycosyltransferase</keyword>
<keyword id="KW-0333">Golgi apparatus</keyword>
<keyword id="KW-0472">Membrane</keyword>
<keyword id="KW-1185">Reference proteome</keyword>
<keyword id="KW-0735">Signal-anchor</keyword>
<keyword id="KW-0808">Transferase</keyword>
<keyword id="KW-0812">Transmembrane</keyword>
<keyword id="KW-1133">Transmembrane helix</keyword>
<accession>O48684</accession>
<reference key="1">
    <citation type="journal article" date="2000" name="Nature">
        <title>Sequence and analysis of chromosome 1 of the plant Arabidopsis thaliana.</title>
        <authorList>
            <person name="Theologis A."/>
            <person name="Ecker J.R."/>
            <person name="Palm C.J."/>
            <person name="Federspiel N.A."/>
            <person name="Kaul S."/>
            <person name="White O."/>
            <person name="Alonso J."/>
            <person name="Altafi H."/>
            <person name="Araujo R."/>
            <person name="Bowman C.L."/>
            <person name="Brooks S.Y."/>
            <person name="Buehler E."/>
            <person name="Chan A."/>
            <person name="Chao Q."/>
            <person name="Chen H."/>
            <person name="Cheuk R.F."/>
            <person name="Chin C.W."/>
            <person name="Chung M.K."/>
            <person name="Conn L."/>
            <person name="Conway A.B."/>
            <person name="Conway A.R."/>
            <person name="Creasy T.H."/>
            <person name="Dewar K."/>
            <person name="Dunn P."/>
            <person name="Etgu P."/>
            <person name="Feldblyum T.V."/>
            <person name="Feng J.-D."/>
            <person name="Fong B."/>
            <person name="Fujii C.Y."/>
            <person name="Gill J.E."/>
            <person name="Goldsmith A.D."/>
            <person name="Haas B."/>
            <person name="Hansen N.F."/>
            <person name="Hughes B."/>
            <person name="Huizar L."/>
            <person name="Hunter J.L."/>
            <person name="Jenkins J."/>
            <person name="Johnson-Hopson C."/>
            <person name="Khan S."/>
            <person name="Khaykin E."/>
            <person name="Kim C.J."/>
            <person name="Koo H.L."/>
            <person name="Kremenetskaia I."/>
            <person name="Kurtz D.B."/>
            <person name="Kwan A."/>
            <person name="Lam B."/>
            <person name="Langin-Hooper S."/>
            <person name="Lee A."/>
            <person name="Lee J.M."/>
            <person name="Lenz C.A."/>
            <person name="Li J.H."/>
            <person name="Li Y.-P."/>
            <person name="Lin X."/>
            <person name="Liu S.X."/>
            <person name="Liu Z.A."/>
            <person name="Luros J.S."/>
            <person name="Maiti R."/>
            <person name="Marziali A."/>
            <person name="Militscher J."/>
            <person name="Miranda M."/>
            <person name="Nguyen M."/>
            <person name="Nierman W.C."/>
            <person name="Osborne B.I."/>
            <person name="Pai G."/>
            <person name="Peterson J."/>
            <person name="Pham P.K."/>
            <person name="Rizzo M."/>
            <person name="Rooney T."/>
            <person name="Rowley D."/>
            <person name="Sakano H."/>
            <person name="Salzberg S.L."/>
            <person name="Schwartz J.R."/>
            <person name="Shinn P."/>
            <person name="Southwick A.M."/>
            <person name="Sun H."/>
            <person name="Tallon L.J."/>
            <person name="Tambunga G."/>
            <person name="Toriumi M.J."/>
            <person name="Town C.D."/>
            <person name="Utterback T."/>
            <person name="Van Aken S."/>
            <person name="Vaysberg M."/>
            <person name="Vysotskaia V.S."/>
            <person name="Walker M."/>
            <person name="Wu D."/>
            <person name="Yu G."/>
            <person name="Fraser C.M."/>
            <person name="Venter J.C."/>
            <person name="Davis R.W."/>
        </authorList>
    </citation>
    <scope>NUCLEOTIDE SEQUENCE [LARGE SCALE GENOMIC DNA]</scope>
    <source>
        <strain>cv. Columbia</strain>
    </source>
</reference>
<reference key="2">
    <citation type="journal article" date="2017" name="Plant J.">
        <title>Araport11: a complete reannotation of the Arabidopsis thaliana reference genome.</title>
        <authorList>
            <person name="Cheng C.Y."/>
            <person name="Krishnakumar V."/>
            <person name="Chan A.P."/>
            <person name="Thibaud-Nissen F."/>
            <person name="Schobel S."/>
            <person name="Town C.D."/>
        </authorList>
    </citation>
    <scope>GENOME REANNOTATION</scope>
    <source>
        <strain>cv. Columbia</strain>
    </source>
</reference>
<reference key="3">
    <citation type="journal article" date="2002" name="Science">
        <title>Functional annotation of a full-length Arabidopsis cDNA collection.</title>
        <authorList>
            <person name="Seki M."/>
            <person name="Narusaka M."/>
            <person name="Kamiya A."/>
            <person name="Ishida J."/>
            <person name="Satou M."/>
            <person name="Sakurai T."/>
            <person name="Nakajima M."/>
            <person name="Enju A."/>
            <person name="Akiyama K."/>
            <person name="Oono Y."/>
            <person name="Muramatsu M."/>
            <person name="Hayashizaki Y."/>
            <person name="Kawai J."/>
            <person name="Carninci P."/>
            <person name="Itoh M."/>
            <person name="Ishii Y."/>
            <person name="Arakawa T."/>
            <person name="Shibata K."/>
            <person name="Shinagawa A."/>
            <person name="Shinozaki K."/>
        </authorList>
    </citation>
    <scope>NUCLEOTIDE SEQUENCE [LARGE SCALE MRNA]</scope>
    <source>
        <strain>cv. Columbia</strain>
    </source>
</reference>
<reference key="4">
    <citation type="journal article" date="2000" name="Plant Mol. Biol.">
        <title>Organization and structural evolution of four multigene families in Arabidopsis thaliana: AtLCAD, AtLGT, AtMYST and AtHD-GL2.</title>
        <authorList>
            <person name="Tavares R."/>
            <person name="Aubourg S."/>
            <person name="Lecharny A."/>
            <person name="Kreis M."/>
        </authorList>
    </citation>
    <scope>GENE FAMILY</scope>
    <scope>NOMENCLATURE</scope>
</reference>
<reference key="5">
    <citation type="journal article" date="2006" name="Proc. Natl. Acad. Sci. U.S.A.">
        <title>Functional identification of an Arabidopsis pectin biosynthetic homogalacturonan galacturonosyltransferase.</title>
        <authorList>
            <person name="Sterling J.D."/>
            <person name="Atmodjo M.A."/>
            <person name="Inwood S.E."/>
            <person name="Kumar Kolli V.S."/>
            <person name="Quigley H.F."/>
            <person name="Hahn M.G."/>
            <person name="Mohnen D."/>
        </authorList>
    </citation>
    <scope>GENE FAMILY</scope>
    <scope>NOMENCLATURE</scope>
</reference>
<organism>
    <name type="scientific">Arabidopsis thaliana</name>
    <name type="common">Mouse-ear cress</name>
    <dbReference type="NCBI Taxonomy" id="3702"/>
    <lineage>
        <taxon>Eukaryota</taxon>
        <taxon>Viridiplantae</taxon>
        <taxon>Streptophyta</taxon>
        <taxon>Embryophyta</taxon>
        <taxon>Tracheophyta</taxon>
        <taxon>Spermatophyta</taxon>
        <taxon>Magnoliopsida</taxon>
        <taxon>eudicotyledons</taxon>
        <taxon>Gunneridae</taxon>
        <taxon>Pentapetalae</taxon>
        <taxon>rosids</taxon>
        <taxon>malvids</taxon>
        <taxon>Brassicales</taxon>
        <taxon>Brassicaceae</taxon>
        <taxon>Camelineae</taxon>
        <taxon>Arabidopsis</taxon>
    </lineage>
</organism>
<evidence type="ECO:0000250" key="1"/>
<evidence type="ECO:0000255" key="2"/>
<evidence type="ECO:0000305" key="3"/>
<feature type="chain" id="PRO_0000392610" description="Probable galacturonosyltransferase-like 8">
    <location>
        <begin position="1"/>
        <end position="393"/>
    </location>
</feature>
<feature type="topological domain" description="Cytoplasmic" evidence="2">
    <location>
        <begin position="1"/>
        <end position="4"/>
    </location>
</feature>
<feature type="transmembrane region" description="Helical; Signal-anchor for type II membrane protein" evidence="2">
    <location>
        <begin position="5"/>
        <end position="25"/>
    </location>
</feature>
<feature type="topological domain" description="Lumenal" evidence="2">
    <location>
        <begin position="26"/>
        <end position="393"/>
    </location>
</feature>
<feature type="glycosylation site" description="N-linked (GlcNAc...) asparagine" evidence="2">
    <location>
        <position position="226"/>
    </location>
</feature>
<comment type="function">
    <text evidence="1">May be involved in pectin and/or xylans biosynthesis in cell walls.</text>
</comment>
<comment type="pathway">
    <text>Glycan metabolism; pectin biosynthesis.</text>
</comment>
<comment type="subcellular location">
    <subcellularLocation>
        <location evidence="1">Golgi apparatus membrane</location>
        <topology evidence="1">Single-pass type II membrane protein</topology>
    </subcellularLocation>
</comment>
<comment type="similarity">
    <text evidence="3">Belongs to the glycosyltransferase 8 family.</text>
</comment>
<proteinExistence type="evidence at transcript level"/>